<comment type="function">
    <text evidence="1">Specifically methylates the N4 position of cytidine in position 1402 (C1402) of 16S rRNA.</text>
</comment>
<comment type="catalytic activity">
    <reaction evidence="1">
        <text>cytidine(1402) in 16S rRNA + S-adenosyl-L-methionine = N(4)-methylcytidine(1402) in 16S rRNA + S-adenosyl-L-homocysteine + H(+)</text>
        <dbReference type="Rhea" id="RHEA:42928"/>
        <dbReference type="Rhea" id="RHEA-COMP:10286"/>
        <dbReference type="Rhea" id="RHEA-COMP:10287"/>
        <dbReference type="ChEBI" id="CHEBI:15378"/>
        <dbReference type="ChEBI" id="CHEBI:57856"/>
        <dbReference type="ChEBI" id="CHEBI:59789"/>
        <dbReference type="ChEBI" id="CHEBI:74506"/>
        <dbReference type="ChEBI" id="CHEBI:82748"/>
        <dbReference type="EC" id="2.1.1.199"/>
    </reaction>
</comment>
<comment type="subcellular location">
    <subcellularLocation>
        <location evidence="1">Cytoplasm</location>
    </subcellularLocation>
</comment>
<comment type="similarity">
    <text evidence="1">Belongs to the methyltransferase superfamily. RsmH family.</text>
</comment>
<protein>
    <recommendedName>
        <fullName evidence="1">Ribosomal RNA small subunit methyltransferase H</fullName>
        <ecNumber evidence="1">2.1.1.199</ecNumber>
    </recommendedName>
    <alternativeName>
        <fullName evidence="1">16S rRNA m(4)C1402 methyltransferase</fullName>
    </alternativeName>
    <alternativeName>
        <fullName evidence="1">rRNA (cytosine-N(4)-)-methyltransferase RsmH</fullName>
    </alternativeName>
</protein>
<organism>
    <name type="scientific">Campylobacter fetus subsp. fetus (strain 82-40)</name>
    <dbReference type="NCBI Taxonomy" id="360106"/>
    <lineage>
        <taxon>Bacteria</taxon>
        <taxon>Pseudomonadati</taxon>
        <taxon>Campylobacterota</taxon>
        <taxon>Epsilonproteobacteria</taxon>
        <taxon>Campylobacterales</taxon>
        <taxon>Campylobacteraceae</taxon>
        <taxon>Campylobacter</taxon>
    </lineage>
</organism>
<dbReference type="EC" id="2.1.1.199" evidence="1"/>
<dbReference type="EMBL" id="CP000487">
    <property type="protein sequence ID" value="ABK82013.1"/>
    <property type="molecule type" value="Genomic_DNA"/>
</dbReference>
<dbReference type="RefSeq" id="WP_002848952.1">
    <property type="nucleotide sequence ID" value="NC_008599.1"/>
</dbReference>
<dbReference type="SMR" id="A0RNH4"/>
<dbReference type="GeneID" id="61064413"/>
<dbReference type="KEGG" id="cff:CFF8240_0567"/>
<dbReference type="eggNOG" id="COG0275">
    <property type="taxonomic scope" value="Bacteria"/>
</dbReference>
<dbReference type="HOGENOM" id="CLU_038422_3_0_7"/>
<dbReference type="Proteomes" id="UP000000760">
    <property type="component" value="Chromosome"/>
</dbReference>
<dbReference type="GO" id="GO:0005737">
    <property type="term" value="C:cytoplasm"/>
    <property type="evidence" value="ECO:0007669"/>
    <property type="project" value="UniProtKB-SubCell"/>
</dbReference>
<dbReference type="GO" id="GO:0071424">
    <property type="term" value="F:rRNA (cytosine-N4-)-methyltransferase activity"/>
    <property type="evidence" value="ECO:0007669"/>
    <property type="project" value="UniProtKB-UniRule"/>
</dbReference>
<dbReference type="GO" id="GO:0070475">
    <property type="term" value="P:rRNA base methylation"/>
    <property type="evidence" value="ECO:0007669"/>
    <property type="project" value="UniProtKB-UniRule"/>
</dbReference>
<dbReference type="Gene3D" id="1.10.150.170">
    <property type="entry name" value="Putative methyltransferase TM0872, insert domain"/>
    <property type="match status" value="1"/>
</dbReference>
<dbReference type="Gene3D" id="3.40.50.150">
    <property type="entry name" value="Vaccinia Virus protein VP39"/>
    <property type="match status" value="1"/>
</dbReference>
<dbReference type="HAMAP" id="MF_01007">
    <property type="entry name" value="16SrRNA_methyltr_H"/>
    <property type="match status" value="1"/>
</dbReference>
<dbReference type="InterPro" id="IPR002903">
    <property type="entry name" value="RsmH"/>
</dbReference>
<dbReference type="InterPro" id="IPR023397">
    <property type="entry name" value="SAM-dep_MeTrfase_MraW_recog"/>
</dbReference>
<dbReference type="InterPro" id="IPR029063">
    <property type="entry name" value="SAM-dependent_MTases_sf"/>
</dbReference>
<dbReference type="NCBIfam" id="TIGR00006">
    <property type="entry name" value="16S rRNA (cytosine(1402)-N(4))-methyltransferase RsmH"/>
    <property type="match status" value="1"/>
</dbReference>
<dbReference type="PANTHER" id="PTHR11265:SF0">
    <property type="entry name" value="12S RRNA N4-METHYLCYTIDINE METHYLTRANSFERASE"/>
    <property type="match status" value="1"/>
</dbReference>
<dbReference type="PANTHER" id="PTHR11265">
    <property type="entry name" value="S-ADENOSYL-METHYLTRANSFERASE MRAW"/>
    <property type="match status" value="1"/>
</dbReference>
<dbReference type="Pfam" id="PF01795">
    <property type="entry name" value="Methyltransf_5"/>
    <property type="match status" value="1"/>
</dbReference>
<dbReference type="PIRSF" id="PIRSF004486">
    <property type="entry name" value="MraW"/>
    <property type="match status" value="1"/>
</dbReference>
<dbReference type="SUPFAM" id="SSF81799">
    <property type="entry name" value="Putative methyltransferase TM0872, insert domain"/>
    <property type="match status" value="1"/>
</dbReference>
<dbReference type="SUPFAM" id="SSF53335">
    <property type="entry name" value="S-adenosyl-L-methionine-dependent methyltransferases"/>
    <property type="match status" value="1"/>
</dbReference>
<sequence length="307" mass="34557">MDSPHIPVLLKPVLNSFKDIKNGTILDCTLGYGGHSEAILISNPNLKIIACDRDSESLSFCKAKFEKYSDRIKIYKSNFAGILNKIDHEDIRGILADIGVSSLQLDLDERGFSINSNNLDMRMDKNQTFSAKELINSYSKDQLADIFYKYAELPNAKSLAQKIVDARDKSPIKSAKELSSIIGRSNLKNRSVSIAILAFQAIRIEVNKELDELNNLLNLIKSSKINNAILDIISFHSLEDKIAKSTFKEWEKSCICDNFVMKCECGNNHSIGKILTKKPITPSEDEIKQNPRSSCAKMRIFHIQRNV</sequence>
<accession>A0RNH4</accession>
<proteinExistence type="inferred from homology"/>
<name>RSMH_CAMFF</name>
<evidence type="ECO:0000255" key="1">
    <source>
        <dbReference type="HAMAP-Rule" id="MF_01007"/>
    </source>
</evidence>
<reference key="1">
    <citation type="submission" date="2006-11" db="EMBL/GenBank/DDBJ databases">
        <title>Sequence of Campylobacter fetus subsp. fetus 82-40.</title>
        <authorList>
            <person name="Fouts D.E."/>
            <person name="Nelson K.E."/>
        </authorList>
    </citation>
    <scope>NUCLEOTIDE SEQUENCE [LARGE SCALE GENOMIC DNA]</scope>
    <source>
        <strain>82-40</strain>
    </source>
</reference>
<keyword id="KW-0963">Cytoplasm</keyword>
<keyword id="KW-0489">Methyltransferase</keyword>
<keyword id="KW-0698">rRNA processing</keyword>
<keyword id="KW-0949">S-adenosyl-L-methionine</keyword>
<keyword id="KW-0808">Transferase</keyword>
<gene>
    <name evidence="1" type="primary">rsmH</name>
    <name type="synonym">mraW</name>
    <name type="ordered locus">CFF8240_0567</name>
</gene>
<feature type="chain" id="PRO_0000386786" description="Ribosomal RNA small subunit methyltransferase H">
    <location>
        <begin position="1"/>
        <end position="307"/>
    </location>
</feature>
<feature type="binding site" evidence="1">
    <location>
        <begin position="33"/>
        <end position="35"/>
    </location>
    <ligand>
        <name>S-adenosyl-L-methionine</name>
        <dbReference type="ChEBI" id="CHEBI:59789"/>
    </ligand>
</feature>
<feature type="binding site" evidence="1">
    <location>
        <position position="52"/>
    </location>
    <ligand>
        <name>S-adenosyl-L-methionine</name>
        <dbReference type="ChEBI" id="CHEBI:59789"/>
    </ligand>
</feature>
<feature type="binding site" evidence="1">
    <location>
        <position position="83"/>
    </location>
    <ligand>
        <name>S-adenosyl-L-methionine</name>
        <dbReference type="ChEBI" id="CHEBI:59789"/>
    </ligand>
</feature>
<feature type="binding site" evidence="1">
    <location>
        <position position="97"/>
    </location>
    <ligand>
        <name>S-adenosyl-L-methionine</name>
        <dbReference type="ChEBI" id="CHEBI:59789"/>
    </ligand>
</feature>
<feature type="binding site" evidence="1">
    <location>
        <position position="104"/>
    </location>
    <ligand>
        <name>S-adenosyl-L-methionine</name>
        <dbReference type="ChEBI" id="CHEBI:59789"/>
    </ligand>
</feature>